<accession>Q9BPE1</accession>
<comment type="subcellular location">
    <subcellularLocation>
        <location evidence="4">Secreted</location>
    </subcellularLocation>
</comment>
<comment type="tissue specificity">
    <text evidence="4">Expressed by the venom duct.</text>
</comment>
<comment type="domain">
    <text evidence="3">The cysteine framework is V (CC-CC).</text>
</comment>
<comment type="PTM">
    <text evidence="3">Contains 2 disulfide bonds that can be either 'C1-C3, C2-C4' or 'C1-C4, C2-C3', since these disulfide connectivities have been observed for conotoxins with cysteine framework V (for examples, see AC P0DQQ7 and AC P81755).</text>
</comment>
<comment type="similarity">
    <text evidence="3">Belongs to the conotoxin T superfamily.</text>
</comment>
<reference key="1">
    <citation type="journal article" date="2001" name="Mol. Biol. Evol.">
        <title>Mechanisms for evolving hypervariability: the case of conopeptides.</title>
        <authorList>
            <person name="Conticello S.G."/>
            <person name="Gilad Y."/>
            <person name="Avidan N."/>
            <person name="Ben-Asher E."/>
            <person name="Levy Z."/>
            <person name="Fainzilber M."/>
        </authorList>
    </citation>
    <scope>NUCLEOTIDE SEQUENCE [MRNA]</scope>
    <source>
        <tissue>Venom duct</tissue>
    </source>
</reference>
<protein>
    <recommendedName>
        <fullName evidence="3">Conotoxin Vn5.5</fullName>
    </recommendedName>
    <alternativeName>
        <fullName evidence="5">Conotoxin VnMLCL-021</fullName>
    </alternativeName>
</protein>
<feature type="signal peptide" evidence="2">
    <location>
        <begin position="1"/>
        <end position="19"/>
    </location>
</feature>
<feature type="propeptide" id="PRO_0000404966" evidence="1">
    <location>
        <begin position="20"/>
        <end position="59"/>
    </location>
</feature>
<feature type="peptide" id="PRO_0000404967" description="Conotoxin Vn5.5">
    <location>
        <begin position="60"/>
        <end position="75"/>
    </location>
</feature>
<feature type="modified residue" description="Pyrrolidone carboxylic acid" evidence="1">
    <location>
        <position position="60"/>
    </location>
</feature>
<keyword id="KW-1015">Disulfide bond</keyword>
<keyword id="KW-0528">Neurotoxin</keyword>
<keyword id="KW-0873">Pyrrolidone carboxylic acid</keyword>
<keyword id="KW-0964">Secreted</keyword>
<keyword id="KW-0732">Signal</keyword>
<keyword id="KW-0800">Toxin</keyword>
<sequence length="75" mass="8314">MLCLPVFIILLLLASPAAPNPLEKRIQSDLIRAALEDADMKTDEREIVNIIDSISDVAKQICCEITVQCCVLDEE</sequence>
<proteinExistence type="inferred from homology"/>
<organism>
    <name type="scientific">Conus ventricosus</name>
    <name type="common">Mediterranean cone</name>
    <dbReference type="NCBI Taxonomy" id="117992"/>
    <lineage>
        <taxon>Eukaryota</taxon>
        <taxon>Metazoa</taxon>
        <taxon>Spiralia</taxon>
        <taxon>Lophotrochozoa</taxon>
        <taxon>Mollusca</taxon>
        <taxon>Gastropoda</taxon>
        <taxon>Caenogastropoda</taxon>
        <taxon>Neogastropoda</taxon>
        <taxon>Conoidea</taxon>
        <taxon>Conidae</taxon>
        <taxon>Conus</taxon>
        <taxon>Lautoconus</taxon>
    </lineage>
</organism>
<evidence type="ECO:0000250" key="1"/>
<evidence type="ECO:0000255" key="2"/>
<evidence type="ECO:0000305" key="3"/>
<evidence type="ECO:0000305" key="4">
    <source>
    </source>
</evidence>
<evidence type="ECO:0000312" key="5">
    <source>
        <dbReference type="EMBL" id="AAG60421.1"/>
    </source>
</evidence>
<name>CT55_CONVE</name>
<dbReference type="EMBL" id="AF214993">
    <property type="protein sequence ID" value="AAG60421.1"/>
    <property type="molecule type" value="mRNA"/>
</dbReference>
<dbReference type="SMR" id="Q9BPE1"/>
<dbReference type="ConoServer" id="680">
    <property type="toxin name" value="Vn5.5 precursor"/>
</dbReference>
<dbReference type="GO" id="GO:0005576">
    <property type="term" value="C:extracellular region"/>
    <property type="evidence" value="ECO:0007669"/>
    <property type="project" value="UniProtKB-SubCell"/>
</dbReference>
<dbReference type="GO" id="GO:0008200">
    <property type="term" value="F:ion channel inhibitor activity"/>
    <property type="evidence" value="ECO:0007669"/>
    <property type="project" value="InterPro"/>
</dbReference>
<dbReference type="GO" id="GO:0090729">
    <property type="term" value="F:toxin activity"/>
    <property type="evidence" value="ECO:0007669"/>
    <property type="project" value="UniProtKB-KW"/>
</dbReference>
<dbReference type="InterPro" id="IPR004214">
    <property type="entry name" value="Conotoxin"/>
</dbReference>
<dbReference type="Pfam" id="PF02950">
    <property type="entry name" value="Conotoxin"/>
    <property type="match status" value="1"/>
</dbReference>